<organism>
    <name type="scientific">Acinetobacter baumannii (strain AYE)</name>
    <dbReference type="NCBI Taxonomy" id="509173"/>
    <lineage>
        <taxon>Bacteria</taxon>
        <taxon>Pseudomonadati</taxon>
        <taxon>Pseudomonadota</taxon>
        <taxon>Gammaproteobacteria</taxon>
        <taxon>Moraxellales</taxon>
        <taxon>Moraxellaceae</taxon>
        <taxon>Acinetobacter</taxon>
        <taxon>Acinetobacter calcoaceticus/baumannii complex</taxon>
    </lineage>
</organism>
<comment type="function">
    <text evidence="1">Catalyzes the reversible interconversion of serine and glycine with tetrahydrofolate (THF) serving as the one-carbon carrier. This reaction serves as the major source of one-carbon groups required for the biosynthesis of purines, thymidylate, methionine, and other important biomolecules. Also exhibits THF-independent aldolase activity toward beta-hydroxyamino acids, producing glycine and aldehydes, via a retro-aldol mechanism.</text>
</comment>
<comment type="catalytic activity">
    <reaction evidence="1">
        <text>(6R)-5,10-methylene-5,6,7,8-tetrahydrofolate + glycine + H2O = (6S)-5,6,7,8-tetrahydrofolate + L-serine</text>
        <dbReference type="Rhea" id="RHEA:15481"/>
        <dbReference type="ChEBI" id="CHEBI:15377"/>
        <dbReference type="ChEBI" id="CHEBI:15636"/>
        <dbReference type="ChEBI" id="CHEBI:33384"/>
        <dbReference type="ChEBI" id="CHEBI:57305"/>
        <dbReference type="ChEBI" id="CHEBI:57453"/>
        <dbReference type="EC" id="2.1.2.1"/>
    </reaction>
</comment>
<comment type="cofactor">
    <cofactor evidence="1">
        <name>pyridoxal 5'-phosphate</name>
        <dbReference type="ChEBI" id="CHEBI:597326"/>
    </cofactor>
</comment>
<comment type="pathway">
    <text evidence="1">One-carbon metabolism; tetrahydrofolate interconversion.</text>
</comment>
<comment type="pathway">
    <text evidence="1">Amino-acid biosynthesis; glycine biosynthesis; glycine from L-serine: step 1/1.</text>
</comment>
<comment type="subunit">
    <text evidence="1">Homodimer.</text>
</comment>
<comment type="subcellular location">
    <subcellularLocation>
        <location evidence="1">Cytoplasm</location>
    </subcellularLocation>
</comment>
<comment type="similarity">
    <text evidence="1">Belongs to the SHMT family.</text>
</comment>
<protein>
    <recommendedName>
        <fullName evidence="1">Serine hydroxymethyltransferase</fullName>
        <shortName evidence="1">SHMT</shortName>
        <shortName evidence="1">Serine methylase</shortName>
        <ecNumber evidence="1">2.1.2.1</ecNumber>
    </recommendedName>
</protein>
<reference key="1">
    <citation type="journal article" date="2008" name="PLoS ONE">
        <title>Comparative analysis of Acinetobacters: three genomes for three lifestyles.</title>
        <authorList>
            <person name="Vallenet D."/>
            <person name="Nordmann P."/>
            <person name="Barbe V."/>
            <person name="Poirel L."/>
            <person name="Mangenot S."/>
            <person name="Bataille E."/>
            <person name="Dossat C."/>
            <person name="Gas S."/>
            <person name="Kreimeyer A."/>
            <person name="Lenoble P."/>
            <person name="Oztas S."/>
            <person name="Poulain J."/>
            <person name="Segurens B."/>
            <person name="Robert C."/>
            <person name="Abergel C."/>
            <person name="Claverie J.-M."/>
            <person name="Raoult D."/>
            <person name="Medigue C."/>
            <person name="Weissenbach J."/>
            <person name="Cruveiller S."/>
        </authorList>
    </citation>
    <scope>NUCLEOTIDE SEQUENCE [LARGE SCALE GENOMIC DNA]</scope>
    <source>
        <strain>AYE</strain>
    </source>
</reference>
<evidence type="ECO:0000255" key="1">
    <source>
        <dbReference type="HAMAP-Rule" id="MF_00051"/>
    </source>
</evidence>
<dbReference type="EC" id="2.1.2.1" evidence="1"/>
<dbReference type="EMBL" id="CU459141">
    <property type="protein sequence ID" value="CAM86097.1"/>
    <property type="molecule type" value="Genomic_DNA"/>
</dbReference>
<dbReference type="RefSeq" id="WP_000457893.1">
    <property type="nucleotide sequence ID" value="NZ_JBDGFB010000005.1"/>
</dbReference>
<dbReference type="SMR" id="B0VBB3"/>
<dbReference type="EnsemblBacteria" id="CAM86097">
    <property type="protein sequence ID" value="CAM86097"/>
    <property type="gene ID" value="ABAYE1171"/>
</dbReference>
<dbReference type="GeneID" id="92894564"/>
<dbReference type="KEGG" id="aby:ABAYE1171"/>
<dbReference type="HOGENOM" id="CLU_022477_2_1_6"/>
<dbReference type="UniPathway" id="UPA00193"/>
<dbReference type="UniPathway" id="UPA00288">
    <property type="reaction ID" value="UER01023"/>
</dbReference>
<dbReference type="GO" id="GO:0005829">
    <property type="term" value="C:cytosol"/>
    <property type="evidence" value="ECO:0007669"/>
    <property type="project" value="TreeGrafter"/>
</dbReference>
<dbReference type="GO" id="GO:0004372">
    <property type="term" value="F:glycine hydroxymethyltransferase activity"/>
    <property type="evidence" value="ECO:0007669"/>
    <property type="project" value="UniProtKB-UniRule"/>
</dbReference>
<dbReference type="GO" id="GO:0030170">
    <property type="term" value="F:pyridoxal phosphate binding"/>
    <property type="evidence" value="ECO:0007669"/>
    <property type="project" value="UniProtKB-UniRule"/>
</dbReference>
<dbReference type="GO" id="GO:0019264">
    <property type="term" value="P:glycine biosynthetic process from serine"/>
    <property type="evidence" value="ECO:0007669"/>
    <property type="project" value="UniProtKB-UniRule"/>
</dbReference>
<dbReference type="GO" id="GO:0035999">
    <property type="term" value="P:tetrahydrofolate interconversion"/>
    <property type="evidence" value="ECO:0007669"/>
    <property type="project" value="UniProtKB-UniRule"/>
</dbReference>
<dbReference type="CDD" id="cd00378">
    <property type="entry name" value="SHMT"/>
    <property type="match status" value="1"/>
</dbReference>
<dbReference type="FunFam" id="3.40.640.10:FF:000001">
    <property type="entry name" value="Serine hydroxymethyltransferase"/>
    <property type="match status" value="1"/>
</dbReference>
<dbReference type="FunFam" id="3.90.1150.10:FF:000003">
    <property type="entry name" value="Serine hydroxymethyltransferase"/>
    <property type="match status" value="1"/>
</dbReference>
<dbReference type="Gene3D" id="3.90.1150.10">
    <property type="entry name" value="Aspartate Aminotransferase, domain 1"/>
    <property type="match status" value="1"/>
</dbReference>
<dbReference type="Gene3D" id="3.40.640.10">
    <property type="entry name" value="Type I PLP-dependent aspartate aminotransferase-like (Major domain)"/>
    <property type="match status" value="1"/>
</dbReference>
<dbReference type="HAMAP" id="MF_00051">
    <property type="entry name" value="SHMT"/>
    <property type="match status" value="1"/>
</dbReference>
<dbReference type="InterPro" id="IPR015424">
    <property type="entry name" value="PyrdxlP-dep_Trfase"/>
</dbReference>
<dbReference type="InterPro" id="IPR015421">
    <property type="entry name" value="PyrdxlP-dep_Trfase_major"/>
</dbReference>
<dbReference type="InterPro" id="IPR015422">
    <property type="entry name" value="PyrdxlP-dep_Trfase_small"/>
</dbReference>
<dbReference type="InterPro" id="IPR001085">
    <property type="entry name" value="Ser_HO-MeTrfase"/>
</dbReference>
<dbReference type="InterPro" id="IPR049943">
    <property type="entry name" value="Ser_HO-MeTrfase-like"/>
</dbReference>
<dbReference type="InterPro" id="IPR019798">
    <property type="entry name" value="Ser_HO-MeTrfase_PLP_BS"/>
</dbReference>
<dbReference type="InterPro" id="IPR039429">
    <property type="entry name" value="SHMT-like_dom"/>
</dbReference>
<dbReference type="NCBIfam" id="NF000586">
    <property type="entry name" value="PRK00011.1"/>
    <property type="match status" value="1"/>
</dbReference>
<dbReference type="PANTHER" id="PTHR11680">
    <property type="entry name" value="SERINE HYDROXYMETHYLTRANSFERASE"/>
    <property type="match status" value="1"/>
</dbReference>
<dbReference type="PANTHER" id="PTHR11680:SF50">
    <property type="entry name" value="SERINE HYDROXYMETHYLTRANSFERASE"/>
    <property type="match status" value="1"/>
</dbReference>
<dbReference type="Pfam" id="PF00464">
    <property type="entry name" value="SHMT"/>
    <property type="match status" value="1"/>
</dbReference>
<dbReference type="PIRSF" id="PIRSF000412">
    <property type="entry name" value="SHMT"/>
    <property type="match status" value="1"/>
</dbReference>
<dbReference type="SUPFAM" id="SSF53383">
    <property type="entry name" value="PLP-dependent transferases"/>
    <property type="match status" value="1"/>
</dbReference>
<dbReference type="PROSITE" id="PS00096">
    <property type="entry name" value="SHMT"/>
    <property type="match status" value="1"/>
</dbReference>
<accession>B0VBB3</accession>
<keyword id="KW-0028">Amino-acid biosynthesis</keyword>
<keyword id="KW-0963">Cytoplasm</keyword>
<keyword id="KW-0554">One-carbon metabolism</keyword>
<keyword id="KW-0663">Pyridoxal phosphate</keyword>
<keyword id="KW-0808">Transferase</keyword>
<proteinExistence type="inferred from homology"/>
<sequence>MFANISISEFDPELAQAIASEDERQEAHIELIASENYCSPAVMEAQGSKLTNKYAEGYPGKRYYGGCEFVDVIEQMAIDRAKELFGADYANVQPHAGSQANSAVYLALLNPGDTVLGMSLAHGGHLTHGAKVSFSGKTYNAVQYGLNAETGEIDYEEVERLALEHKPRMIVAGFSAYSRVVDWQRFRDIADKVGAYLFVDMAHVAGLVAAGVYPNPVQIADVTTTTTHKTLRGPRSGLILAKANEEIEKKLQSAVFPGNQGGPLMHAIAAKAICFKEAMSDDFKAYQQQVVKNAQAMAEVFIARGYDVVSGGTDNHLFLLSLIKQDVTGKDADAWLGAAHITVNKNSVPNDPRSPFVTSGIRIGTPAVTTRGFGEAEVRELAGWIADVIDSKGDEKVIADVKAKVEAVCAKFPVYAK</sequence>
<gene>
    <name evidence="1" type="primary">glyA</name>
    <name type="ordered locus">ABAYE1171</name>
</gene>
<name>GLYA_ACIBY</name>
<feature type="chain" id="PRO_1000091509" description="Serine hydroxymethyltransferase">
    <location>
        <begin position="1"/>
        <end position="417"/>
    </location>
</feature>
<feature type="binding site" evidence="1">
    <location>
        <position position="120"/>
    </location>
    <ligand>
        <name>(6S)-5,6,7,8-tetrahydrofolate</name>
        <dbReference type="ChEBI" id="CHEBI:57453"/>
    </ligand>
</feature>
<feature type="binding site" evidence="1">
    <location>
        <begin position="124"/>
        <end position="126"/>
    </location>
    <ligand>
        <name>(6S)-5,6,7,8-tetrahydrofolate</name>
        <dbReference type="ChEBI" id="CHEBI:57453"/>
    </ligand>
</feature>
<feature type="binding site" evidence="1">
    <location>
        <begin position="354"/>
        <end position="356"/>
    </location>
    <ligand>
        <name>(6S)-5,6,7,8-tetrahydrofolate</name>
        <dbReference type="ChEBI" id="CHEBI:57453"/>
    </ligand>
</feature>
<feature type="site" description="Plays an important role in substrate specificity" evidence="1">
    <location>
        <position position="228"/>
    </location>
</feature>
<feature type="modified residue" description="N6-(pyridoxal phosphate)lysine" evidence="1">
    <location>
        <position position="229"/>
    </location>
</feature>